<sequence>MGDSDDEYDRKRRDKFRGERSAGGGGDSYGRGADRPDRSRGRDDWPDRVRPRQDYRDYRPPPRDRGYSPAREGPTVKRMRGDTWGDEGRHRFGAHDGYGMYGYAHDHFGMHPTVGPYGHQHATHQREPVVSGDMQTQPCMMTLKQFLATQDDSISDSDAITKYNEYKLEFRRQQMNEFFVAHKDEEWFKIKYHPEESQKRKEEQLSFLKRRCEVFLELLKSKEIGKVSVDASNTDALLRLLDTVVIKLEGGTEEDLKVLDIKPSVVEAAARTPATLNEEKVKTESKVDATAKELAVKMEEDSSKQETETDVLSVPQSEEDARNGNSKIKEELSKSMDDGNENGDKSKSNDAQKSEKEIAEVEHEAHKHESEDRKKRSRSDSGSSSSSSSSSSSSESEEEKDERMNKEDNEDEENMRIPEEEKKSDSADTMDNINRDKEVDEGKPVCDAEDLNTADDRDDNADQNKEQNEFEETTKDKNSSDPVNDENKENSDKKSQQEGDSKAETIDLAKDPADGGSRALHRTSSIFLRNLAPSITKAEVEAMCRRYNGFLRVAIADPLLERRWFRRGWVTFKREVNIKEICWNLNNIRLRDCELGAIVNKDLSRRVRPVNGITCHKTVVRSDIKLGAKIAHNLDDKWGLWKETPTAASGTGEAGDKNGSEVQPEESFGLQSKNPVLQNITDYLIEEASAEEEELLGLSEDSKKVSEGELIERDPQLIEVLDRLILYLRIVHSVDFYNHCEYPYEDEMPNRCGIIHARGPPSQSKVMSNEIQEYIRTFEGKMASFLTRMVDIDETDMKKLGAKDAEAEVEKFITANTQELAKDKWLCPLSGKKFKGPDFVRKHIFNKHAEKVEEVRKEVEYFNNYLKDSKRPQLPEHPGNAKKPGSEGATSATANASVGAGGYRNQPFGMSHSYAPMYASYAAASMMAPNPRGRAGFGRGGRMGGPDYRPVIHYRDLDAPREPDEFL</sequence>
<accession>Q5TUF1</accession>
<gene>
    <name type="primary">Ars2</name>
    <name type="ORF">AGAP010382</name>
</gene>
<protein>
    <recommendedName>
        <fullName>Serrate RNA effector molecule homolog</fullName>
    </recommendedName>
    <alternativeName>
        <fullName>Arsenite-resistance protein 2 homolog</fullName>
    </alternativeName>
</protein>
<name>SRRT_ANOGA</name>
<proteinExistence type="inferred from homology"/>
<comment type="function">
    <text evidence="1">Acts as a mediator between the cap-binding complex (CBC) and RNA-mediated gene silencing (RNAi). Involved in innate immunity via the short interfering RNAs (siRNAs) processing machinery by restricting the viral RNA production. Also involved microRNA (miRNA)-mediated silencing by contributing to the stability and delivery of primary miRNA transcripts to the primary miRNA processing complex (By similarity).</text>
</comment>
<comment type="subcellular location">
    <subcellularLocation>
        <location evidence="1">Nucleus</location>
    </subcellularLocation>
</comment>
<comment type="similarity">
    <text evidence="3">Belongs to the ARS2 family.</text>
</comment>
<keyword id="KW-0539">Nucleus</keyword>
<keyword id="KW-1185">Reference proteome</keyword>
<keyword id="KW-0943">RNA-mediated gene silencing</keyword>
<organism>
    <name type="scientific">Anopheles gambiae</name>
    <name type="common">African malaria mosquito</name>
    <dbReference type="NCBI Taxonomy" id="7165"/>
    <lineage>
        <taxon>Eukaryota</taxon>
        <taxon>Metazoa</taxon>
        <taxon>Ecdysozoa</taxon>
        <taxon>Arthropoda</taxon>
        <taxon>Hexapoda</taxon>
        <taxon>Insecta</taxon>
        <taxon>Pterygota</taxon>
        <taxon>Neoptera</taxon>
        <taxon>Endopterygota</taxon>
        <taxon>Diptera</taxon>
        <taxon>Nematocera</taxon>
        <taxon>Culicoidea</taxon>
        <taxon>Culicidae</taxon>
        <taxon>Anophelinae</taxon>
        <taxon>Anopheles</taxon>
    </lineage>
</organism>
<dbReference type="EMBL" id="AAAB01008849">
    <property type="protein sequence ID" value="EAL41034.3"/>
    <property type="molecule type" value="Genomic_DNA"/>
</dbReference>
<dbReference type="RefSeq" id="XP_559074.3">
    <property type="nucleotide sequence ID" value="XM_559074.3"/>
</dbReference>
<dbReference type="SMR" id="Q5TUF1"/>
<dbReference type="FunCoup" id="Q5TUF1">
    <property type="interactions" value="2627"/>
</dbReference>
<dbReference type="STRING" id="7165.Q5TUF1"/>
<dbReference type="PaxDb" id="7165-AGAP010382-PA"/>
<dbReference type="EnsemblMetazoa" id="AGAP010382-RA">
    <property type="protein sequence ID" value="AGAP010382-PA"/>
    <property type="gene ID" value="AGAP010382"/>
</dbReference>
<dbReference type="GeneID" id="1272662"/>
<dbReference type="KEGG" id="aga:1272662"/>
<dbReference type="CTD" id="35539"/>
<dbReference type="VEuPathDB" id="VectorBase:AGAMI1_014199"/>
<dbReference type="VEuPathDB" id="VectorBase:AGAP010382"/>
<dbReference type="eggNOG" id="KOG2295">
    <property type="taxonomic scope" value="Eukaryota"/>
</dbReference>
<dbReference type="HOGENOM" id="CLU_008560_0_0_1"/>
<dbReference type="InParanoid" id="Q5TUF1"/>
<dbReference type="OMA" id="GARDEWS"/>
<dbReference type="PhylomeDB" id="Q5TUF1"/>
<dbReference type="Proteomes" id="UP000007062">
    <property type="component" value="Chromosome 3L"/>
</dbReference>
<dbReference type="GO" id="GO:0016604">
    <property type="term" value="C:nuclear body"/>
    <property type="evidence" value="ECO:0000318"/>
    <property type="project" value="GO_Central"/>
</dbReference>
<dbReference type="GO" id="GO:0005654">
    <property type="term" value="C:nucleoplasm"/>
    <property type="evidence" value="ECO:0000250"/>
    <property type="project" value="UniProtKB"/>
</dbReference>
<dbReference type="GO" id="GO:0003676">
    <property type="term" value="F:nucleic acid binding"/>
    <property type="evidence" value="ECO:0007669"/>
    <property type="project" value="InterPro"/>
</dbReference>
<dbReference type="GO" id="GO:0031053">
    <property type="term" value="P:primary miRNA processing"/>
    <property type="evidence" value="ECO:0000250"/>
    <property type="project" value="UniProtKB"/>
</dbReference>
<dbReference type="CDD" id="cd00590">
    <property type="entry name" value="RRM_SF"/>
    <property type="match status" value="1"/>
</dbReference>
<dbReference type="FunFam" id="3.30.70.330:FF:000593">
    <property type="entry name" value="Serrate RNA effector molecule homolog"/>
    <property type="match status" value="1"/>
</dbReference>
<dbReference type="Gene3D" id="3.30.70.330">
    <property type="match status" value="1"/>
</dbReference>
<dbReference type="InterPro" id="IPR012677">
    <property type="entry name" value="Nucleotide-bd_a/b_plait_sf"/>
</dbReference>
<dbReference type="InterPro" id="IPR035979">
    <property type="entry name" value="RBD_domain_sf"/>
</dbReference>
<dbReference type="InterPro" id="IPR039727">
    <property type="entry name" value="SE/Ars2"/>
</dbReference>
<dbReference type="InterPro" id="IPR007042">
    <property type="entry name" value="SERRATE/Ars2_C"/>
</dbReference>
<dbReference type="InterPro" id="IPR021933">
    <property type="entry name" value="SERRATE/Ars2_N"/>
</dbReference>
<dbReference type="PANTHER" id="PTHR13165">
    <property type="entry name" value="ARSENITE-RESISTANCE PROTEIN 2"/>
    <property type="match status" value="1"/>
</dbReference>
<dbReference type="PANTHER" id="PTHR13165:SF0">
    <property type="entry name" value="SERRATE RNA EFFECTOR MOLECULE HOMOLOG"/>
    <property type="match status" value="1"/>
</dbReference>
<dbReference type="Pfam" id="PF04959">
    <property type="entry name" value="ARS2"/>
    <property type="match status" value="1"/>
</dbReference>
<dbReference type="Pfam" id="PF12066">
    <property type="entry name" value="SERRATE_Ars2_N"/>
    <property type="match status" value="1"/>
</dbReference>
<dbReference type="SUPFAM" id="SSF54928">
    <property type="entry name" value="RNA-binding domain, RBD"/>
    <property type="match status" value="1"/>
</dbReference>
<feature type="chain" id="PRO_0000385215" description="Serrate RNA effector molecule homolog">
    <location>
        <begin position="1"/>
        <end position="967"/>
    </location>
</feature>
<feature type="region of interest" description="Disordered" evidence="2">
    <location>
        <begin position="1"/>
        <end position="84"/>
    </location>
</feature>
<feature type="region of interest" description="Disordered" evidence="2">
    <location>
        <begin position="296"/>
        <end position="518"/>
    </location>
</feature>
<feature type="region of interest" description="Disordered" evidence="2">
    <location>
        <begin position="645"/>
        <end position="669"/>
    </location>
</feature>
<feature type="region of interest" description="Disordered" evidence="2">
    <location>
        <begin position="868"/>
        <end position="893"/>
    </location>
</feature>
<feature type="compositionally biased region" description="Basic and acidic residues" evidence="2">
    <location>
        <begin position="8"/>
        <end position="20"/>
    </location>
</feature>
<feature type="compositionally biased region" description="Basic and acidic residues" evidence="2">
    <location>
        <begin position="32"/>
        <end position="66"/>
    </location>
</feature>
<feature type="compositionally biased region" description="Basic and acidic residues" evidence="2">
    <location>
        <begin position="296"/>
        <end position="307"/>
    </location>
</feature>
<feature type="compositionally biased region" description="Basic and acidic residues" evidence="2">
    <location>
        <begin position="319"/>
        <end position="374"/>
    </location>
</feature>
<feature type="compositionally biased region" description="Low complexity" evidence="2">
    <location>
        <begin position="380"/>
        <end position="394"/>
    </location>
</feature>
<feature type="compositionally biased region" description="Basic and acidic residues" evidence="2">
    <location>
        <begin position="414"/>
        <end position="426"/>
    </location>
</feature>
<feature type="compositionally biased region" description="Basic and acidic residues" evidence="2">
    <location>
        <begin position="433"/>
        <end position="446"/>
    </location>
</feature>
<feature type="compositionally biased region" description="Acidic residues" evidence="2">
    <location>
        <begin position="447"/>
        <end position="459"/>
    </location>
</feature>
<feature type="compositionally biased region" description="Basic and acidic residues" evidence="2">
    <location>
        <begin position="460"/>
        <end position="513"/>
    </location>
</feature>
<reference key="1">
    <citation type="journal article" date="2002" name="Science">
        <title>The genome sequence of the malaria mosquito Anopheles gambiae.</title>
        <authorList>
            <person name="Holt R.A."/>
            <person name="Subramanian G.M."/>
            <person name="Halpern A."/>
            <person name="Sutton G.G."/>
            <person name="Charlab R."/>
            <person name="Nusskern D.R."/>
            <person name="Wincker P."/>
            <person name="Clark A.G."/>
            <person name="Ribeiro J.M.C."/>
            <person name="Wides R."/>
            <person name="Salzberg S.L."/>
            <person name="Loftus B.J."/>
            <person name="Yandell M.D."/>
            <person name="Majoros W.H."/>
            <person name="Rusch D.B."/>
            <person name="Lai Z."/>
            <person name="Kraft C.L."/>
            <person name="Abril J.F."/>
            <person name="Anthouard V."/>
            <person name="Arensburger P."/>
            <person name="Atkinson P.W."/>
            <person name="Baden H."/>
            <person name="de Berardinis V."/>
            <person name="Baldwin D."/>
            <person name="Benes V."/>
            <person name="Biedler J."/>
            <person name="Blass C."/>
            <person name="Bolanos R."/>
            <person name="Boscus D."/>
            <person name="Barnstead M."/>
            <person name="Cai S."/>
            <person name="Center A."/>
            <person name="Chaturverdi K."/>
            <person name="Christophides G.K."/>
            <person name="Chrystal M.A.M."/>
            <person name="Clamp M."/>
            <person name="Cravchik A."/>
            <person name="Curwen V."/>
            <person name="Dana A."/>
            <person name="Delcher A."/>
            <person name="Dew I."/>
            <person name="Evans C.A."/>
            <person name="Flanigan M."/>
            <person name="Grundschober-Freimoser A."/>
            <person name="Friedli L."/>
            <person name="Gu Z."/>
            <person name="Guan P."/>
            <person name="Guigo R."/>
            <person name="Hillenmeyer M.E."/>
            <person name="Hladun S.L."/>
            <person name="Hogan J.R."/>
            <person name="Hong Y.S."/>
            <person name="Hoover J."/>
            <person name="Jaillon O."/>
            <person name="Ke Z."/>
            <person name="Kodira C.D."/>
            <person name="Kokoza E."/>
            <person name="Koutsos A."/>
            <person name="Letunic I."/>
            <person name="Levitsky A.A."/>
            <person name="Liang Y."/>
            <person name="Lin J.-J."/>
            <person name="Lobo N.F."/>
            <person name="Lopez J.R."/>
            <person name="Malek J.A."/>
            <person name="McIntosh T.C."/>
            <person name="Meister S."/>
            <person name="Miller J.R."/>
            <person name="Mobarry C."/>
            <person name="Mongin E."/>
            <person name="Murphy S.D."/>
            <person name="O'Brochta D.A."/>
            <person name="Pfannkoch C."/>
            <person name="Qi R."/>
            <person name="Regier M.A."/>
            <person name="Remington K."/>
            <person name="Shao H."/>
            <person name="Sharakhova M.V."/>
            <person name="Sitter C.D."/>
            <person name="Shetty J."/>
            <person name="Smith T.J."/>
            <person name="Strong R."/>
            <person name="Sun J."/>
            <person name="Thomasova D."/>
            <person name="Ton L.Q."/>
            <person name="Topalis P."/>
            <person name="Tu Z.J."/>
            <person name="Unger M.F."/>
            <person name="Walenz B."/>
            <person name="Wang A.H."/>
            <person name="Wang J."/>
            <person name="Wang M."/>
            <person name="Wang X."/>
            <person name="Woodford K.J."/>
            <person name="Wortman J.R."/>
            <person name="Wu M."/>
            <person name="Yao A."/>
            <person name="Zdobnov E.M."/>
            <person name="Zhang H."/>
            <person name="Zhao Q."/>
            <person name="Zhao S."/>
            <person name="Zhu S.C."/>
            <person name="Zhimulev I."/>
            <person name="Coluzzi M."/>
            <person name="della Torre A."/>
            <person name="Roth C.W."/>
            <person name="Louis C."/>
            <person name="Kalush F."/>
            <person name="Mural R.J."/>
            <person name="Myers E.W."/>
            <person name="Adams M.D."/>
            <person name="Smith H.O."/>
            <person name="Broder S."/>
            <person name="Gardner M.J."/>
            <person name="Fraser C.M."/>
            <person name="Birney E."/>
            <person name="Bork P."/>
            <person name="Brey P.T."/>
            <person name="Venter J.C."/>
            <person name="Weissenbach J."/>
            <person name="Kafatos F.C."/>
            <person name="Collins F.H."/>
            <person name="Hoffman S.L."/>
        </authorList>
    </citation>
    <scope>NUCLEOTIDE SEQUENCE [LARGE SCALE GENOMIC DNA]</scope>
    <source>
        <strain>PEST</strain>
    </source>
</reference>
<evidence type="ECO:0000250" key="1"/>
<evidence type="ECO:0000256" key="2">
    <source>
        <dbReference type="SAM" id="MobiDB-lite"/>
    </source>
</evidence>
<evidence type="ECO:0000305" key="3"/>